<dbReference type="EMBL" id="CP001349">
    <property type="protein sequence ID" value="ACL56892.1"/>
    <property type="molecule type" value="Genomic_DNA"/>
</dbReference>
<dbReference type="RefSeq" id="WP_015928583.1">
    <property type="nucleotide sequence ID" value="NC_011894.1"/>
</dbReference>
<dbReference type="SMR" id="B8IS80"/>
<dbReference type="STRING" id="460265.Mnod_1903"/>
<dbReference type="KEGG" id="mno:Mnod_1903"/>
<dbReference type="eggNOG" id="COG0048">
    <property type="taxonomic scope" value="Bacteria"/>
</dbReference>
<dbReference type="HOGENOM" id="CLU_104295_1_2_5"/>
<dbReference type="OrthoDB" id="9802366at2"/>
<dbReference type="Proteomes" id="UP000008207">
    <property type="component" value="Chromosome"/>
</dbReference>
<dbReference type="GO" id="GO:0015935">
    <property type="term" value="C:small ribosomal subunit"/>
    <property type="evidence" value="ECO:0007669"/>
    <property type="project" value="InterPro"/>
</dbReference>
<dbReference type="GO" id="GO:0019843">
    <property type="term" value="F:rRNA binding"/>
    <property type="evidence" value="ECO:0007669"/>
    <property type="project" value="UniProtKB-UniRule"/>
</dbReference>
<dbReference type="GO" id="GO:0003735">
    <property type="term" value="F:structural constituent of ribosome"/>
    <property type="evidence" value="ECO:0007669"/>
    <property type="project" value="InterPro"/>
</dbReference>
<dbReference type="GO" id="GO:0000049">
    <property type="term" value="F:tRNA binding"/>
    <property type="evidence" value="ECO:0007669"/>
    <property type="project" value="UniProtKB-UniRule"/>
</dbReference>
<dbReference type="GO" id="GO:0006412">
    <property type="term" value="P:translation"/>
    <property type="evidence" value="ECO:0007669"/>
    <property type="project" value="UniProtKB-UniRule"/>
</dbReference>
<dbReference type="CDD" id="cd03368">
    <property type="entry name" value="Ribosomal_S12"/>
    <property type="match status" value="1"/>
</dbReference>
<dbReference type="FunFam" id="2.40.50.140:FF:000001">
    <property type="entry name" value="30S ribosomal protein S12"/>
    <property type="match status" value="1"/>
</dbReference>
<dbReference type="Gene3D" id="2.40.50.140">
    <property type="entry name" value="Nucleic acid-binding proteins"/>
    <property type="match status" value="1"/>
</dbReference>
<dbReference type="HAMAP" id="MF_00403_B">
    <property type="entry name" value="Ribosomal_uS12_B"/>
    <property type="match status" value="1"/>
</dbReference>
<dbReference type="InterPro" id="IPR012340">
    <property type="entry name" value="NA-bd_OB-fold"/>
</dbReference>
<dbReference type="InterPro" id="IPR006032">
    <property type="entry name" value="Ribosomal_uS12"/>
</dbReference>
<dbReference type="InterPro" id="IPR005679">
    <property type="entry name" value="Ribosomal_uS12_bac"/>
</dbReference>
<dbReference type="NCBIfam" id="TIGR00981">
    <property type="entry name" value="rpsL_bact"/>
    <property type="match status" value="1"/>
</dbReference>
<dbReference type="PANTHER" id="PTHR11652">
    <property type="entry name" value="30S RIBOSOMAL PROTEIN S12 FAMILY MEMBER"/>
    <property type="match status" value="1"/>
</dbReference>
<dbReference type="Pfam" id="PF00164">
    <property type="entry name" value="Ribosom_S12_S23"/>
    <property type="match status" value="1"/>
</dbReference>
<dbReference type="PIRSF" id="PIRSF002133">
    <property type="entry name" value="Ribosomal_S12/S23"/>
    <property type="match status" value="1"/>
</dbReference>
<dbReference type="PRINTS" id="PR01034">
    <property type="entry name" value="RIBOSOMALS12"/>
</dbReference>
<dbReference type="SUPFAM" id="SSF50249">
    <property type="entry name" value="Nucleic acid-binding proteins"/>
    <property type="match status" value="1"/>
</dbReference>
<dbReference type="PROSITE" id="PS00055">
    <property type="entry name" value="RIBOSOMAL_S12"/>
    <property type="match status" value="1"/>
</dbReference>
<evidence type="ECO:0000250" key="1"/>
<evidence type="ECO:0000255" key="2">
    <source>
        <dbReference type="HAMAP-Rule" id="MF_00403"/>
    </source>
</evidence>
<evidence type="ECO:0000305" key="3"/>
<gene>
    <name evidence="2" type="primary">rpsL</name>
    <name type="ordered locus">Mnod_1903</name>
</gene>
<accession>B8IS80</accession>
<sequence length="123" mass="13864">MPTINQLIANPRKIQKSRNKVPALEACPQKRGVCTRVYTTTPKKPNSALRKVAKVRLTNGFEVIGYIPGEGHNLQEHSVVMIRGGRVKDLPGVRYHILRGVLDTQGVKNRKQRRSKYGAKRPK</sequence>
<comment type="function">
    <text evidence="2">With S4 and S5 plays an important role in translational accuracy.</text>
</comment>
<comment type="function">
    <text evidence="2">Interacts with and stabilizes bases of the 16S rRNA that are involved in tRNA selection in the A site and with the mRNA backbone. Located at the interface of the 30S and 50S subunits, it traverses the body of the 30S subunit contacting proteins on the other side and probably holding the rRNA structure together. The combined cluster of proteins S8, S12 and S17 appears to hold together the shoulder and platform of the 30S subunit.</text>
</comment>
<comment type="subunit">
    <text evidence="2">Part of the 30S ribosomal subunit. Contacts proteins S8 and S17. May interact with IF1 in the 30S initiation complex.</text>
</comment>
<comment type="similarity">
    <text evidence="2">Belongs to the universal ribosomal protein uS12 family.</text>
</comment>
<keyword id="KW-0488">Methylation</keyword>
<keyword id="KW-1185">Reference proteome</keyword>
<keyword id="KW-0687">Ribonucleoprotein</keyword>
<keyword id="KW-0689">Ribosomal protein</keyword>
<keyword id="KW-0694">RNA-binding</keyword>
<keyword id="KW-0699">rRNA-binding</keyword>
<keyword id="KW-0820">tRNA-binding</keyword>
<proteinExistence type="inferred from homology"/>
<reference key="1">
    <citation type="submission" date="2009-01" db="EMBL/GenBank/DDBJ databases">
        <title>Complete sequence of chromosome of Methylobacterium nodulans ORS 2060.</title>
        <authorList>
            <consortium name="US DOE Joint Genome Institute"/>
            <person name="Lucas S."/>
            <person name="Copeland A."/>
            <person name="Lapidus A."/>
            <person name="Glavina del Rio T."/>
            <person name="Dalin E."/>
            <person name="Tice H."/>
            <person name="Bruce D."/>
            <person name="Goodwin L."/>
            <person name="Pitluck S."/>
            <person name="Sims D."/>
            <person name="Brettin T."/>
            <person name="Detter J.C."/>
            <person name="Han C."/>
            <person name="Larimer F."/>
            <person name="Land M."/>
            <person name="Hauser L."/>
            <person name="Kyrpides N."/>
            <person name="Ivanova N."/>
            <person name="Marx C.J."/>
            <person name="Richardson P."/>
        </authorList>
    </citation>
    <scope>NUCLEOTIDE SEQUENCE [LARGE SCALE GENOMIC DNA]</scope>
    <source>
        <strain>LMG 21967 / CNCM I-2342 / ORS 2060</strain>
    </source>
</reference>
<feature type="chain" id="PRO_1000134643" description="Small ribosomal subunit protein uS12">
    <location>
        <begin position="1"/>
        <end position="123"/>
    </location>
</feature>
<feature type="modified residue" description="3-methylthioaspartic acid" evidence="1">
    <location>
        <position position="89"/>
    </location>
</feature>
<organism>
    <name type="scientific">Methylobacterium nodulans (strain LMG 21967 / CNCM I-2342 / ORS 2060)</name>
    <dbReference type="NCBI Taxonomy" id="460265"/>
    <lineage>
        <taxon>Bacteria</taxon>
        <taxon>Pseudomonadati</taxon>
        <taxon>Pseudomonadota</taxon>
        <taxon>Alphaproteobacteria</taxon>
        <taxon>Hyphomicrobiales</taxon>
        <taxon>Methylobacteriaceae</taxon>
        <taxon>Methylobacterium</taxon>
    </lineage>
</organism>
<name>RS12_METNO</name>
<protein>
    <recommendedName>
        <fullName evidence="2">Small ribosomal subunit protein uS12</fullName>
    </recommendedName>
    <alternativeName>
        <fullName evidence="3">30S ribosomal protein S12</fullName>
    </alternativeName>
</protein>